<protein>
    <recommendedName>
        <fullName evidence="7">Methyl-accepting chemotaxis protein TlpQ</fullName>
    </recommendedName>
    <alternativeName>
        <fullName evidence="6">TlpQ chemoreceptor</fullName>
    </alternativeName>
</protein>
<reference key="1">
    <citation type="journal article" date="2000" name="Nature">
        <title>Complete genome sequence of Pseudomonas aeruginosa PAO1, an opportunistic pathogen.</title>
        <authorList>
            <person name="Stover C.K."/>
            <person name="Pham X.-Q.T."/>
            <person name="Erwin A.L."/>
            <person name="Mizoguchi S.D."/>
            <person name="Warrener P."/>
            <person name="Hickey M.J."/>
            <person name="Brinkman F.S.L."/>
            <person name="Hufnagle W.O."/>
            <person name="Kowalik D.J."/>
            <person name="Lagrou M."/>
            <person name="Garber R.L."/>
            <person name="Goltry L."/>
            <person name="Tolentino E."/>
            <person name="Westbrock-Wadman S."/>
            <person name="Yuan Y."/>
            <person name="Brody L.L."/>
            <person name="Coulter S.N."/>
            <person name="Folger K.R."/>
            <person name="Kas A."/>
            <person name="Larbig K."/>
            <person name="Lim R.M."/>
            <person name="Smith K.A."/>
            <person name="Spencer D.H."/>
            <person name="Wong G.K.-S."/>
            <person name="Wu Z."/>
            <person name="Paulsen I.T."/>
            <person name="Reizer J."/>
            <person name="Saier M.H. Jr."/>
            <person name="Hancock R.E.W."/>
            <person name="Lory S."/>
            <person name="Olson M.V."/>
        </authorList>
    </citation>
    <scope>NUCLEOTIDE SEQUENCE [LARGE SCALE GENOMIC DNA]</scope>
    <source>
        <strain>ATCC 15692 / DSM 22644 / CIP 104116 / JCM 14847 / LMG 12228 / 1C / PRS 101 / PAO1</strain>
    </source>
</reference>
<reference key="2">
    <citation type="journal article" date="2020" name="Nat. Commun.">
        <title>Sensing of autoinducer-2 by functionally distinct receptors in prokaryotes.</title>
        <authorList>
            <person name="Zhang L."/>
            <person name="Li S."/>
            <person name="Liu X."/>
            <person name="Wang Z."/>
            <person name="Jiang M."/>
            <person name="Wang R."/>
            <person name="Xie L."/>
            <person name="Liu Q."/>
            <person name="Xie X."/>
            <person name="Shang D."/>
            <person name="Li M."/>
            <person name="Wei Z."/>
            <person name="Wang Y."/>
            <person name="Fan C."/>
            <person name="Luo Z.Q."/>
            <person name="Shen X."/>
        </authorList>
    </citation>
    <scope>FUNCTION IN RESPONSE TO AI-2</scope>
    <scope>DISRUPTION PHENOTYPE</scope>
    <source>
        <strain>ATCC 15692 / DSM 22644 / CIP 104116 / JCM 14847 / LMG 12228 / 1C / PRS 101 / PAO1</strain>
    </source>
</reference>
<reference evidence="10" key="3">
    <citation type="journal article" date="2018" name="MBio">
        <title>High-affinity chemotaxis to histamine mediated by the TlpQ chemoreceptor of the human pathogen Pseudomonas aeruginosa.</title>
        <authorList>
            <person name="Corral-Lugo A."/>
            <person name="Matilla M.A."/>
            <person name="Martin-Mora D."/>
            <person name="Silva Jimenez H."/>
            <person name="Mesa Torres N."/>
            <person name="Kato J."/>
            <person name="Hida A."/>
            <person name="Oku S."/>
            <person name="Conejero-Muriel M."/>
            <person name="Gavira J.A."/>
            <person name="Krell T."/>
        </authorList>
    </citation>
    <scope>X-RAY CRYSTALLOGRAPHY (2.45 ANGSTROMS) OF 36-360 IN COMPLEX WITH HISTAMINE</scope>
    <scope>FUNCTION</scope>
    <scope>SUBUNIT</scope>
    <scope>DISRUPTION PHENOTYPE</scope>
    <source>
        <strain>ATCC 15692 / DSM 22644 / CIP 104116 / JCM 14847 / LMG 12228 / 1C / PRS 101 / PAO1</strain>
    </source>
</reference>
<proteinExistence type="evidence at protein level"/>
<sequence>MFLRRLSIQWKITLLAGLCLLGVVALLVGLSVYRMQHSSVLVKSASTQMLDESARLRLEARGELQALRIQRYFMDAFQYGKGFSRQILFLRDQAQKRFLDAYDLREDLTRQVRTALAANPEVLGLYVVFEPNALDGKDELFVDQPALGSNDKGRFSLYWAQATPGQLESESMIESELADTSSGPSGAAYNAWYTCPKESGQPCVLDPYFDKVGERQLLMTSIAFPLELDGKVIGVMGLDINLSNLQALSEQGNRELYDGVGQVGILSPAGLFAGNSRDAGLLGKNLAKADPQHAGELLQLLAAGKSRLFNENDDLKVLQPLQPIPGAKPWGVLLEVPKSALLGPALALERQLDDMRREGTWVELGLGLGAAVLGLLVLWLSARGVTRPILGVAHMLRDIASGEGDLTQRLPHTGRDELGELAGWFNRFLDKLQPIIRDVKVSVRDARSTADQSAAISSQTSAGMQQQFREIDQVATASHEMTATAQDVARSAAQAADAARGADQATRDGLALIDRTTQSIDSLAANLTSAMGQVEQLASSSEEIGSVLEVIRAIAEQTNLLALNAAIEAARAGDAGRGFAVVADEVRNLARRTQDSVEQIRGVIEGLQQGTRDVVDAMHGSHRQAQGSVEQVDEAVAALQRIGEAVTVINDMNLQIASAAEEQSSVAEEINRNVAAIRDVTESLSSQAEESAQVSQSLNRLANHQQGLMEQFKA</sequence>
<evidence type="ECO:0000255" key="1"/>
<evidence type="ECO:0000255" key="2">
    <source>
        <dbReference type="PROSITE-ProRule" id="PRU00102"/>
    </source>
</evidence>
<evidence type="ECO:0000255" key="3">
    <source>
        <dbReference type="PROSITE-ProRule" id="PRU00284"/>
    </source>
</evidence>
<evidence type="ECO:0000269" key="4">
    <source>
    </source>
</evidence>
<evidence type="ECO:0000269" key="5">
    <source>
    </source>
</evidence>
<evidence type="ECO:0000303" key="6">
    <source>
    </source>
</evidence>
<evidence type="ECO:0000305" key="7"/>
<evidence type="ECO:0000305" key="8">
    <source>
    </source>
</evidence>
<evidence type="ECO:0000312" key="9">
    <source>
        <dbReference type="EMBL" id="AAG06042.1"/>
    </source>
</evidence>
<evidence type="ECO:0007744" key="10">
    <source>
        <dbReference type="PDB" id="6FU4"/>
    </source>
</evidence>
<evidence type="ECO:0007829" key="11">
    <source>
        <dbReference type="PDB" id="6FU4"/>
    </source>
</evidence>
<comment type="function">
    <text evidence="4 5 8">Chemotactic-signal transducers respond to changes in the concentration of attractants and repellents in the environment, transduce a signal from the outside to the inside of the cell, and facilitate sensory adaptation through the variation of the level of methylation. TlpQ is a chemoreceptor that binds and mediates chemotaxis to histamine, a key biological signaling molecule. It binds histamine with high affinity, which permits responses to very low histamine concentrations (PubMed:30425146). Chemotaxis to histamine may play a role in the virulence of P.aeruginosa by recruiting cells at the infection site and consequently modulating the expression of quorum-sensing-dependent virulence genes (Probable). TlpQ also binds and mediates chemotaxis to polyamines such as putrescine, spermidine, cadaverine, agmatine and ethylenediamine (PubMed:30425146). In addition, binds the quorum-sensing signal autoinducer 2 (AI-2), thus inducing chemotaxis toward AI-2 and biofilm formation (PubMed:33097715).</text>
</comment>
<comment type="subunit">
    <text evidence="4">Homotetramer.</text>
</comment>
<comment type="subcellular location">
    <subcellularLocation>
        <location evidence="7">Cell membrane</location>
        <topology evidence="1">Multi-pass membrane protein</topology>
    </subcellularLocation>
</comment>
<comment type="disruption phenotype">
    <text evidence="4 5">The pctABC-tlpQ deletion mutant is devoid of histamine chemotaxis over the entire concentration range (50 nM to 50 mM) (PubMed:30425146). Deletion of the gene significantly reduces chemotaxis to AI-2 (PubMed:33097715).</text>
</comment>
<comment type="similarity">
    <text evidence="7">Belongs to the methyl-accepting chemotaxis (MCP) protein family.</text>
</comment>
<accession>Q9I0I4</accession>
<keyword id="KW-0002">3D-structure</keyword>
<keyword id="KW-1003">Cell membrane</keyword>
<keyword id="KW-0145">Chemotaxis</keyword>
<keyword id="KW-0472">Membrane</keyword>
<keyword id="KW-0488">Methylation</keyword>
<keyword id="KW-1185">Reference proteome</keyword>
<keyword id="KW-0807">Transducer</keyword>
<keyword id="KW-0812">Transmembrane</keyword>
<keyword id="KW-1133">Transmembrane helix</keyword>
<dbReference type="EMBL" id="AE004091">
    <property type="protein sequence ID" value="AAG06042.1"/>
    <property type="molecule type" value="Genomic_DNA"/>
</dbReference>
<dbReference type="PIR" id="A83314">
    <property type="entry name" value="A83314"/>
</dbReference>
<dbReference type="RefSeq" id="NP_251344.1">
    <property type="nucleotide sequence ID" value="NC_002516.2"/>
</dbReference>
<dbReference type="RefSeq" id="WP_003113383.1">
    <property type="nucleotide sequence ID" value="NZ_QZGE01000008.1"/>
</dbReference>
<dbReference type="PDB" id="6FU4">
    <property type="method" value="X-ray"/>
    <property type="resolution" value="2.45 A"/>
    <property type="chains" value="A/B/C/D=36-360"/>
</dbReference>
<dbReference type="PDBsum" id="6FU4"/>
<dbReference type="SMR" id="Q9I0I4"/>
<dbReference type="STRING" id="208964.PA2654"/>
<dbReference type="PaxDb" id="208964-PA2654"/>
<dbReference type="GeneID" id="882363"/>
<dbReference type="KEGG" id="pae:PA2654"/>
<dbReference type="PATRIC" id="fig|208964.12.peg.2777"/>
<dbReference type="PseudoCAP" id="PA2654"/>
<dbReference type="HOGENOM" id="CLU_000445_107_19_6"/>
<dbReference type="InParanoid" id="Q9I0I4"/>
<dbReference type="OrthoDB" id="2489132at2"/>
<dbReference type="PhylomeDB" id="Q9I0I4"/>
<dbReference type="BioCyc" id="PAER208964:G1FZ6-2694-MONOMER"/>
<dbReference type="Proteomes" id="UP000002438">
    <property type="component" value="Chromosome"/>
</dbReference>
<dbReference type="GO" id="GO:0005886">
    <property type="term" value="C:plasma membrane"/>
    <property type="evidence" value="ECO:0007669"/>
    <property type="project" value="UniProtKB-SubCell"/>
</dbReference>
<dbReference type="GO" id="GO:0006935">
    <property type="term" value="P:chemotaxis"/>
    <property type="evidence" value="ECO:0000318"/>
    <property type="project" value="GO_Central"/>
</dbReference>
<dbReference type="GO" id="GO:0007165">
    <property type="term" value="P:signal transduction"/>
    <property type="evidence" value="ECO:0007669"/>
    <property type="project" value="UniProtKB-KW"/>
</dbReference>
<dbReference type="CDD" id="cd06225">
    <property type="entry name" value="HAMP"/>
    <property type="match status" value="1"/>
</dbReference>
<dbReference type="CDD" id="cd11386">
    <property type="entry name" value="MCP_signal"/>
    <property type="match status" value="1"/>
</dbReference>
<dbReference type="CDD" id="cd12913">
    <property type="entry name" value="PDC1_MCP_like"/>
    <property type="match status" value="1"/>
</dbReference>
<dbReference type="FunFam" id="1.10.287.950:FF:000001">
    <property type="entry name" value="Methyl-accepting chemotaxis sensory transducer"/>
    <property type="match status" value="1"/>
</dbReference>
<dbReference type="Gene3D" id="1.10.8.500">
    <property type="entry name" value="HAMP domain in histidine kinase"/>
    <property type="match status" value="1"/>
</dbReference>
<dbReference type="Gene3D" id="1.10.287.950">
    <property type="entry name" value="Methyl-accepting chemotaxis protein"/>
    <property type="match status" value="1"/>
</dbReference>
<dbReference type="Gene3D" id="3.30.450.20">
    <property type="entry name" value="PAS domain"/>
    <property type="match status" value="1"/>
</dbReference>
<dbReference type="InterPro" id="IPR003660">
    <property type="entry name" value="HAMP_dom"/>
</dbReference>
<dbReference type="InterPro" id="IPR004089">
    <property type="entry name" value="MCPsignal_dom"/>
</dbReference>
<dbReference type="PANTHER" id="PTHR32089">
    <property type="entry name" value="METHYL-ACCEPTING CHEMOTAXIS PROTEIN MCPB"/>
    <property type="match status" value="1"/>
</dbReference>
<dbReference type="PANTHER" id="PTHR32089:SF120">
    <property type="entry name" value="METHYL-ACCEPTING CHEMOTAXIS PROTEIN TLPQ"/>
    <property type="match status" value="1"/>
</dbReference>
<dbReference type="Pfam" id="PF00672">
    <property type="entry name" value="HAMP"/>
    <property type="match status" value="1"/>
</dbReference>
<dbReference type="Pfam" id="PF22673">
    <property type="entry name" value="MCP-like_PDC_1"/>
    <property type="match status" value="1"/>
</dbReference>
<dbReference type="Pfam" id="PF00015">
    <property type="entry name" value="MCPsignal"/>
    <property type="match status" value="1"/>
</dbReference>
<dbReference type="SMART" id="SM00304">
    <property type="entry name" value="HAMP"/>
    <property type="match status" value="1"/>
</dbReference>
<dbReference type="SMART" id="SM00283">
    <property type="entry name" value="MA"/>
    <property type="match status" value="1"/>
</dbReference>
<dbReference type="SUPFAM" id="SSF58104">
    <property type="entry name" value="Methyl-accepting chemotaxis protein (MCP) signaling domain"/>
    <property type="match status" value="1"/>
</dbReference>
<dbReference type="PROSITE" id="PS50111">
    <property type="entry name" value="CHEMOTAXIS_TRANSDUC_2"/>
    <property type="match status" value="1"/>
</dbReference>
<dbReference type="PROSITE" id="PS50885">
    <property type="entry name" value="HAMP"/>
    <property type="match status" value="1"/>
</dbReference>
<name>TLPQ_PSEAE</name>
<feature type="chain" id="PRO_0000454655" description="Methyl-accepting chemotaxis protein TlpQ">
    <location>
        <begin position="1"/>
        <end position="714"/>
    </location>
</feature>
<feature type="transmembrane region" description="Helical" evidence="1">
    <location>
        <begin position="12"/>
        <end position="32"/>
    </location>
</feature>
<feature type="transmembrane region" description="Helical" evidence="1">
    <location>
        <begin position="360"/>
        <end position="380"/>
    </location>
</feature>
<feature type="domain" description="Cache" evidence="7">
    <location>
        <begin position="50"/>
        <end position="290"/>
    </location>
</feature>
<feature type="domain" description="HAMP" evidence="2">
    <location>
        <begin position="383"/>
        <end position="437"/>
    </location>
</feature>
<feature type="domain" description="Methyl-accepting transducer" evidence="3">
    <location>
        <begin position="442"/>
        <end position="678"/>
    </location>
</feature>
<feature type="binding site" evidence="4 10">
    <location>
        <position position="170"/>
    </location>
    <ligand>
        <name>histamine</name>
        <dbReference type="ChEBI" id="CHEBI:58432"/>
    </ligand>
</feature>
<feature type="binding site" evidence="4 10">
    <location>
        <begin position="208"/>
        <end position="210"/>
    </location>
    <ligand>
        <name>histamine</name>
        <dbReference type="ChEBI" id="CHEBI:58432"/>
    </ligand>
</feature>
<feature type="binding site" evidence="4 10">
    <location>
        <position position="239"/>
    </location>
    <ligand>
        <name>histamine</name>
        <dbReference type="ChEBI" id="CHEBI:58432"/>
    </ligand>
</feature>
<feature type="helix" evidence="11">
    <location>
        <begin position="50"/>
        <end position="95"/>
    </location>
</feature>
<feature type="helix" evidence="11">
    <location>
        <begin position="101"/>
        <end position="117"/>
    </location>
</feature>
<feature type="strand" evidence="11">
    <location>
        <begin position="124"/>
        <end position="129"/>
    </location>
</feature>
<feature type="turn" evidence="11">
    <location>
        <begin position="131"/>
        <end position="135"/>
    </location>
</feature>
<feature type="helix" evidence="11">
    <location>
        <begin position="138"/>
        <end position="141"/>
    </location>
</feature>
<feature type="helix" evidence="11">
    <location>
        <begin position="145"/>
        <end position="147"/>
    </location>
</feature>
<feature type="strand" evidence="11">
    <location>
        <begin position="155"/>
        <end position="163"/>
    </location>
</feature>
<feature type="strand" evidence="11">
    <location>
        <begin position="167"/>
        <end position="171"/>
    </location>
</feature>
<feature type="helix" evidence="11">
    <location>
        <begin position="174"/>
        <end position="177"/>
    </location>
</feature>
<feature type="helix" evidence="11">
    <location>
        <begin position="191"/>
        <end position="199"/>
    </location>
</feature>
<feature type="strand" evidence="11">
    <location>
        <begin position="208"/>
        <end position="212"/>
    </location>
</feature>
<feature type="strand" evidence="11">
    <location>
        <begin position="215"/>
        <end position="228"/>
    </location>
</feature>
<feature type="strand" evidence="11">
    <location>
        <begin position="231"/>
        <end position="241"/>
    </location>
</feature>
<feature type="helix" evidence="11">
    <location>
        <begin position="242"/>
        <end position="254"/>
    </location>
</feature>
<feature type="helix" evidence="11">
    <location>
        <begin position="257"/>
        <end position="259"/>
    </location>
</feature>
<feature type="strand" evidence="11">
    <location>
        <begin position="261"/>
        <end position="266"/>
    </location>
</feature>
<feature type="strand" evidence="11">
    <location>
        <begin position="270"/>
        <end position="275"/>
    </location>
</feature>
<feature type="helix" evidence="11">
    <location>
        <begin position="279"/>
        <end position="281"/>
    </location>
</feature>
<feature type="helix" evidence="11">
    <location>
        <begin position="286"/>
        <end position="288"/>
    </location>
</feature>
<feature type="turn" evidence="11">
    <location>
        <begin position="291"/>
        <end position="293"/>
    </location>
</feature>
<feature type="helix" evidence="11">
    <location>
        <begin position="294"/>
        <end position="302"/>
    </location>
</feature>
<feature type="strand" evidence="11">
    <location>
        <begin position="307"/>
        <end position="311"/>
    </location>
</feature>
<feature type="strand" evidence="11">
    <location>
        <begin position="314"/>
        <end position="321"/>
    </location>
</feature>
<feature type="strand" evidence="11">
    <location>
        <begin position="330"/>
        <end position="337"/>
    </location>
</feature>
<feature type="helix" evidence="11">
    <location>
        <begin position="338"/>
        <end position="341"/>
    </location>
</feature>
<organism>
    <name type="scientific">Pseudomonas aeruginosa (strain ATCC 15692 / DSM 22644 / CIP 104116 / JCM 14847 / LMG 12228 / 1C / PRS 101 / PAO1)</name>
    <dbReference type="NCBI Taxonomy" id="208964"/>
    <lineage>
        <taxon>Bacteria</taxon>
        <taxon>Pseudomonadati</taxon>
        <taxon>Pseudomonadota</taxon>
        <taxon>Gammaproteobacteria</taxon>
        <taxon>Pseudomonadales</taxon>
        <taxon>Pseudomonadaceae</taxon>
        <taxon>Pseudomonas</taxon>
    </lineage>
</organism>
<gene>
    <name evidence="6" type="primary">tlpQ</name>
    <name evidence="9" type="ordered locus">PA2654</name>
</gene>